<sequence length="317" mass="35404">MAPSSSSGLTFKLHPLVMLNISDHFTRVKTQLNPPAASCATGNGSNNADAMLLQNPRVYGCVIGLQRGRTVEIFNSFELIFDPALDTLDRSFLEKKQELYKKVFPDFYVLGWYSTGSDATESDMHIHKALMDINESPVYVLLNPAINHAQKDLPVTIYESEFHVIDGIPQSIFVHTSYTIETVEAERISVDHVAHLKPSDGGSAATQLAAHLTGIHSAIKMLNSRIRVLYQHIVAMQKGDKPCENSVLRQVSSLLRSLPAAESEKFNENFLMEYNDKLLMSYLAMITNCTSNMNEVVDKFNTAYDKHSRRGGRTAFM</sequence>
<comment type="function">
    <text evidence="2 4">Component of the COP9 signalosome complex (CSN), a complex involved in various cellular and developmental processes such as photomorphogenesis and auxin and jasmonate responses. The CSN complex is an essential regulator of the ubiquitin (Ubl) conjugation pathway by mediating the deneddylation of the cullin subunits of SCF-type E3 ligase complexes, leading to decrease the Ubl ligase activity of SCF. It is involved in repression of photomorphogenesis in darkness by regulating the activity of COP1-containing Ubl ligase complexes. The complex is also required for degradation of PSIAA6 by regulating the activity of the Ubl ligase SCF-TIR complex. Essential for the structural integrity of the CSN holocomplex (PubMed:17307927).</text>
</comment>
<comment type="subunit">
    <text evidence="3 5">Component of the CSN complex, probably composed of CSN1, CSN2, CSN3, CSN4, CSN5 (CSN5A or CSN5B), CSN6 (CSN6A or CSN6B), CSN7 and CSN8. Interacts with itself. In the complex, it probably interacts directly with CSN4, CSN5A or CSN5B, and CSN7. Binds to the translation initiation factors TIF3E1 (PubMed:19704582).</text>
</comment>
<comment type="subcellular location">
    <subcellularLocation>
        <location evidence="7">Cytoplasm</location>
    </subcellularLocation>
    <subcellularLocation>
        <location evidence="7">Nucleus</location>
    </subcellularLocation>
</comment>
<comment type="disruption phenotype">
    <text evidence="4">No visible phenotype when grown under normal conditions, due to the redundancy with CSN6A. Csn6a and csn6b double mutants are lethal at the seedling stage.</text>
</comment>
<comment type="miscellaneous">
    <text>Although strongly related to metalloprotease proteins, it lacks the JAMM motif that probably constitutes the catalytic center. Its function as protease is therefore unsure.</text>
</comment>
<comment type="similarity">
    <text evidence="7">Belongs to the peptidase M67A family. CSN6 subfamily.</text>
</comment>
<comment type="sequence caution" evidence="7">
    <conflict type="erroneous gene model prediction">
        <sequence resource="EMBL-CDS" id="CAA18227"/>
    </conflict>
</comment>
<comment type="sequence caution" evidence="7">
    <conflict type="erroneous gene model prediction">
        <sequence resource="EMBL-CDS" id="CAB79498"/>
    </conflict>
</comment>
<reference key="1">
    <citation type="journal article" date="2001" name="Plant Cell">
        <title>Molecular characterization of subunit 6 of the COP9 signalosome and its role in multifaceted developmental processes in Arabidopsis.</title>
        <authorList>
            <person name="Peng Z."/>
            <person name="Serino G."/>
            <person name="Deng X.-W."/>
        </authorList>
    </citation>
    <scope>NUCLEOTIDE SEQUENCE [MRNA]</scope>
</reference>
<reference key="2">
    <citation type="journal article" date="2001" name="EMBO J.">
        <title>Subunit interaction maps for the regulatory particle of the 26S proteasome and the COP9 signalosome.</title>
        <authorList>
            <person name="Fu H."/>
            <person name="Reis N."/>
            <person name="Lee Y."/>
            <person name="Glickman M.H."/>
            <person name="Vierstra R."/>
        </authorList>
    </citation>
    <scope>NUCLEOTIDE SEQUENCE [MRNA]</scope>
    <source>
        <strain>cv. Columbia</strain>
    </source>
</reference>
<reference key="3">
    <citation type="journal article" date="1999" name="Nature">
        <title>Sequence and analysis of chromosome 4 of the plant Arabidopsis thaliana.</title>
        <authorList>
            <person name="Mayer K.F.X."/>
            <person name="Schueller C."/>
            <person name="Wambutt R."/>
            <person name="Murphy G."/>
            <person name="Volckaert G."/>
            <person name="Pohl T."/>
            <person name="Duesterhoeft A."/>
            <person name="Stiekema W."/>
            <person name="Entian K.-D."/>
            <person name="Terryn N."/>
            <person name="Harris B."/>
            <person name="Ansorge W."/>
            <person name="Brandt P."/>
            <person name="Grivell L.A."/>
            <person name="Rieger M."/>
            <person name="Weichselgartner M."/>
            <person name="de Simone V."/>
            <person name="Obermaier B."/>
            <person name="Mache R."/>
            <person name="Mueller M."/>
            <person name="Kreis M."/>
            <person name="Delseny M."/>
            <person name="Puigdomenech P."/>
            <person name="Watson M."/>
            <person name="Schmidtheini T."/>
            <person name="Reichert B."/>
            <person name="Portetelle D."/>
            <person name="Perez-Alonso M."/>
            <person name="Boutry M."/>
            <person name="Bancroft I."/>
            <person name="Vos P."/>
            <person name="Hoheisel J."/>
            <person name="Zimmermann W."/>
            <person name="Wedler H."/>
            <person name="Ridley P."/>
            <person name="Langham S.-A."/>
            <person name="McCullagh B."/>
            <person name="Bilham L."/>
            <person name="Robben J."/>
            <person name="van der Schueren J."/>
            <person name="Grymonprez B."/>
            <person name="Chuang Y.-J."/>
            <person name="Vandenbussche F."/>
            <person name="Braeken M."/>
            <person name="Weltjens I."/>
            <person name="Voet M."/>
            <person name="Bastiaens I."/>
            <person name="Aert R."/>
            <person name="Defoor E."/>
            <person name="Weitzenegger T."/>
            <person name="Bothe G."/>
            <person name="Ramsperger U."/>
            <person name="Hilbert H."/>
            <person name="Braun M."/>
            <person name="Holzer E."/>
            <person name="Brandt A."/>
            <person name="Peters S."/>
            <person name="van Staveren M."/>
            <person name="Dirkse W."/>
            <person name="Mooijman P."/>
            <person name="Klein Lankhorst R."/>
            <person name="Rose M."/>
            <person name="Hauf J."/>
            <person name="Koetter P."/>
            <person name="Berneiser S."/>
            <person name="Hempel S."/>
            <person name="Feldpausch M."/>
            <person name="Lamberth S."/>
            <person name="Van den Daele H."/>
            <person name="De Keyser A."/>
            <person name="Buysshaert C."/>
            <person name="Gielen J."/>
            <person name="Villarroel R."/>
            <person name="De Clercq R."/>
            <person name="van Montagu M."/>
            <person name="Rogers J."/>
            <person name="Cronin A."/>
            <person name="Quail M.A."/>
            <person name="Bray-Allen S."/>
            <person name="Clark L."/>
            <person name="Doggett J."/>
            <person name="Hall S."/>
            <person name="Kay M."/>
            <person name="Lennard N."/>
            <person name="McLay K."/>
            <person name="Mayes R."/>
            <person name="Pettett A."/>
            <person name="Rajandream M.A."/>
            <person name="Lyne M."/>
            <person name="Benes V."/>
            <person name="Rechmann S."/>
            <person name="Borkova D."/>
            <person name="Bloecker H."/>
            <person name="Scharfe M."/>
            <person name="Grimm M."/>
            <person name="Loehnert T.-H."/>
            <person name="Dose S."/>
            <person name="de Haan M."/>
            <person name="Maarse A.C."/>
            <person name="Schaefer M."/>
            <person name="Mueller-Auer S."/>
            <person name="Gabel C."/>
            <person name="Fuchs M."/>
            <person name="Fartmann B."/>
            <person name="Granderath K."/>
            <person name="Dauner D."/>
            <person name="Herzl A."/>
            <person name="Neumann S."/>
            <person name="Argiriou A."/>
            <person name="Vitale D."/>
            <person name="Liguori R."/>
            <person name="Piravandi E."/>
            <person name="Massenet O."/>
            <person name="Quigley F."/>
            <person name="Clabauld G."/>
            <person name="Muendlein A."/>
            <person name="Felber R."/>
            <person name="Schnabl S."/>
            <person name="Hiller R."/>
            <person name="Schmidt W."/>
            <person name="Lecharny A."/>
            <person name="Aubourg S."/>
            <person name="Chefdor F."/>
            <person name="Cooke R."/>
            <person name="Berger C."/>
            <person name="Monfort A."/>
            <person name="Casacuberta E."/>
            <person name="Gibbons T."/>
            <person name="Weber N."/>
            <person name="Vandenbol M."/>
            <person name="Bargues M."/>
            <person name="Terol J."/>
            <person name="Torres A."/>
            <person name="Perez-Perez A."/>
            <person name="Purnelle B."/>
            <person name="Bent E."/>
            <person name="Johnson S."/>
            <person name="Tacon D."/>
            <person name="Jesse T."/>
            <person name="Heijnen L."/>
            <person name="Schwarz S."/>
            <person name="Scholler P."/>
            <person name="Heber S."/>
            <person name="Francs P."/>
            <person name="Bielke C."/>
            <person name="Frishman D."/>
            <person name="Haase D."/>
            <person name="Lemcke K."/>
            <person name="Mewes H.-W."/>
            <person name="Stocker S."/>
            <person name="Zaccaria P."/>
            <person name="Bevan M."/>
            <person name="Wilson R.K."/>
            <person name="de la Bastide M."/>
            <person name="Habermann K."/>
            <person name="Parnell L."/>
            <person name="Dedhia N."/>
            <person name="Gnoj L."/>
            <person name="Schutz K."/>
            <person name="Huang E."/>
            <person name="Spiegel L."/>
            <person name="Sekhon M."/>
            <person name="Murray J."/>
            <person name="Sheet P."/>
            <person name="Cordes M."/>
            <person name="Abu-Threideh J."/>
            <person name="Stoneking T."/>
            <person name="Kalicki J."/>
            <person name="Graves T."/>
            <person name="Harmon G."/>
            <person name="Edwards J."/>
            <person name="Latreille P."/>
            <person name="Courtney L."/>
            <person name="Cloud J."/>
            <person name="Abbott A."/>
            <person name="Scott K."/>
            <person name="Johnson D."/>
            <person name="Minx P."/>
            <person name="Bentley D."/>
            <person name="Fulton B."/>
            <person name="Miller N."/>
            <person name="Greco T."/>
            <person name="Kemp K."/>
            <person name="Kramer J."/>
            <person name="Fulton L."/>
            <person name="Mardis E."/>
            <person name="Dante M."/>
            <person name="Pepin K."/>
            <person name="Hillier L.W."/>
            <person name="Nelson J."/>
            <person name="Spieth J."/>
            <person name="Ryan E."/>
            <person name="Andrews S."/>
            <person name="Geisel C."/>
            <person name="Layman D."/>
            <person name="Du H."/>
            <person name="Ali J."/>
            <person name="Berghoff A."/>
            <person name="Jones K."/>
            <person name="Drone K."/>
            <person name="Cotton M."/>
            <person name="Joshu C."/>
            <person name="Antonoiu B."/>
            <person name="Zidanic M."/>
            <person name="Strong C."/>
            <person name="Sun H."/>
            <person name="Lamar B."/>
            <person name="Yordan C."/>
            <person name="Ma P."/>
            <person name="Zhong J."/>
            <person name="Preston R."/>
            <person name="Vil D."/>
            <person name="Shekher M."/>
            <person name="Matero A."/>
            <person name="Shah R."/>
            <person name="Swaby I.K."/>
            <person name="O'Shaughnessy A."/>
            <person name="Rodriguez M."/>
            <person name="Hoffman J."/>
            <person name="Till S."/>
            <person name="Granat S."/>
            <person name="Shohdy N."/>
            <person name="Hasegawa A."/>
            <person name="Hameed A."/>
            <person name="Lodhi M."/>
            <person name="Johnson A."/>
            <person name="Chen E."/>
            <person name="Marra M.A."/>
            <person name="Martienssen R."/>
            <person name="McCombie W.R."/>
        </authorList>
    </citation>
    <scope>NUCLEOTIDE SEQUENCE [LARGE SCALE GENOMIC DNA]</scope>
    <source>
        <strain>cv. Columbia</strain>
    </source>
</reference>
<reference key="4">
    <citation type="journal article" date="2017" name="Plant J.">
        <title>Araport11: a complete reannotation of the Arabidopsis thaliana reference genome.</title>
        <authorList>
            <person name="Cheng C.Y."/>
            <person name="Krishnakumar V."/>
            <person name="Chan A.P."/>
            <person name="Thibaud-Nissen F."/>
            <person name="Schobel S."/>
            <person name="Town C.D."/>
        </authorList>
    </citation>
    <scope>GENOME REANNOTATION</scope>
    <source>
        <strain>cv. Columbia</strain>
    </source>
</reference>
<reference key="5">
    <citation type="journal article" date="2003" name="Science">
        <title>Empirical analysis of transcriptional activity in the Arabidopsis genome.</title>
        <authorList>
            <person name="Yamada K."/>
            <person name="Lim J."/>
            <person name="Dale J.M."/>
            <person name="Chen H."/>
            <person name="Shinn P."/>
            <person name="Palm C.J."/>
            <person name="Southwick A.M."/>
            <person name="Wu H.C."/>
            <person name="Kim C.J."/>
            <person name="Nguyen M."/>
            <person name="Pham P.K."/>
            <person name="Cheuk R.F."/>
            <person name="Karlin-Newmann G."/>
            <person name="Liu S.X."/>
            <person name="Lam B."/>
            <person name="Sakano H."/>
            <person name="Wu T."/>
            <person name="Yu G."/>
            <person name="Miranda M."/>
            <person name="Quach H.L."/>
            <person name="Tripp M."/>
            <person name="Chang C.H."/>
            <person name="Lee J.M."/>
            <person name="Toriumi M.J."/>
            <person name="Chan M.M."/>
            <person name="Tang C.C."/>
            <person name="Onodera C.S."/>
            <person name="Deng J.M."/>
            <person name="Akiyama K."/>
            <person name="Ansari Y."/>
            <person name="Arakawa T."/>
            <person name="Banh J."/>
            <person name="Banno F."/>
            <person name="Bowser L."/>
            <person name="Brooks S.Y."/>
            <person name="Carninci P."/>
            <person name="Chao Q."/>
            <person name="Choy N."/>
            <person name="Enju A."/>
            <person name="Goldsmith A.D."/>
            <person name="Gurjal M."/>
            <person name="Hansen N.F."/>
            <person name="Hayashizaki Y."/>
            <person name="Johnson-Hopson C."/>
            <person name="Hsuan V.W."/>
            <person name="Iida K."/>
            <person name="Karnes M."/>
            <person name="Khan S."/>
            <person name="Koesema E."/>
            <person name="Ishida J."/>
            <person name="Jiang P.X."/>
            <person name="Jones T."/>
            <person name="Kawai J."/>
            <person name="Kamiya A."/>
            <person name="Meyers C."/>
            <person name="Nakajima M."/>
            <person name="Narusaka M."/>
            <person name="Seki M."/>
            <person name="Sakurai T."/>
            <person name="Satou M."/>
            <person name="Tamse R."/>
            <person name="Vaysberg M."/>
            <person name="Wallender E.K."/>
            <person name="Wong C."/>
            <person name="Yamamura Y."/>
            <person name="Yuan S."/>
            <person name="Shinozaki K."/>
            <person name="Davis R.W."/>
            <person name="Theologis A."/>
            <person name="Ecker J.R."/>
        </authorList>
    </citation>
    <scope>NUCLEOTIDE SEQUENCE [LARGE SCALE MRNA]</scope>
    <source>
        <strain>cv. Columbia</strain>
    </source>
</reference>
<reference key="6">
    <citation type="submission" date="2002-03" db="EMBL/GenBank/DDBJ databases">
        <title>Full-length cDNA from Arabidopsis thaliana.</title>
        <authorList>
            <person name="Brover V.V."/>
            <person name="Troukhan M.E."/>
            <person name="Alexandrov N.A."/>
            <person name="Lu Y.-P."/>
            <person name="Flavell R.B."/>
            <person name="Feldmann K.A."/>
        </authorList>
    </citation>
    <scope>NUCLEOTIDE SEQUENCE [LARGE SCALE MRNA]</scope>
</reference>
<reference key="7">
    <citation type="journal article" date="2001" name="Science">
        <title>Interactions of the COP9 signalosome with the E3 ubiquitin ligase SCF(TIR1) in mediating auxin response.</title>
        <authorList>
            <person name="Schwechheimer C."/>
            <person name="Serino G."/>
            <person name="Callis J."/>
            <person name="Crosby W.L."/>
            <person name="Lyapina S."/>
            <person name="Deshaies R.J."/>
            <person name="Gray W.M."/>
            <person name="Estelle M."/>
            <person name="Deng X.-W."/>
        </authorList>
    </citation>
    <scope>FUNCTION</scope>
</reference>
<reference key="8">
    <citation type="journal article" date="2003" name="Plant Cell">
        <title>Characterization of the last subunit of the Arabidopsis COP9 signalosome: implications for the overall structure and origin of the complex.</title>
        <authorList>
            <person name="Serino G."/>
            <person name="Su H."/>
            <person name="Peng Z."/>
            <person name="Tsuge T."/>
            <person name="Wei N."/>
            <person name="Gu H."/>
            <person name="Deng X.-W."/>
        </authorList>
    </citation>
    <scope>INTERACTION WITH CSN4; CSN5 AND CSN7</scope>
</reference>
<reference key="9">
    <citation type="journal article" date="2007" name="Plant Cell">
        <title>Role of the MPN subunits in COP9 signalosome assembly and activity, and their regulatory interaction with Arabidopsis Cullin3-based E3 ligases.</title>
        <authorList>
            <person name="Gusmaroli G."/>
            <person name="Figueroa P."/>
            <person name="Serino G."/>
            <person name="Deng X.W."/>
        </authorList>
    </citation>
    <scope>FUNCTION</scope>
    <scope>DISRUPTION PHENOTYPE</scope>
</reference>
<reference key="10">
    <citation type="journal article" date="2008" name="Plant Signal. Behav.">
        <title>Arabidopsis eIF3e interacts with subunits of the ribosome, Cop9 signalosome and proteasome.</title>
        <authorList>
            <person name="Paz-Aviram T."/>
            <person name="Yahalom A."/>
            <person name="Chamovitz D.A."/>
        </authorList>
    </citation>
    <scope>INTERACTION WITH TIF3E1</scope>
</reference>
<feature type="chain" id="PRO_0000194867" description="COP9 signalosome complex subunit 6b">
    <location>
        <begin position="1"/>
        <end position="317"/>
    </location>
</feature>
<feature type="domain" description="MPN" evidence="1">
    <location>
        <begin position="11"/>
        <end position="164"/>
    </location>
</feature>
<feature type="sequence conflict" description="In Ref. 1; AAL49561." evidence="7" ref="1">
    <original>L</original>
    <variation>V</variation>
    <location>
        <position position="208"/>
    </location>
</feature>
<feature type="sequence conflict" description="In Ref. 1." evidence="7" ref="1">
    <original>G</original>
    <variation>GC</variation>
    <location>
        <position position="239"/>
    </location>
</feature>
<evidence type="ECO:0000255" key="1">
    <source>
        <dbReference type="PROSITE-ProRule" id="PRU01182"/>
    </source>
</evidence>
<evidence type="ECO:0000269" key="2">
    <source>
    </source>
</evidence>
<evidence type="ECO:0000269" key="3">
    <source>
    </source>
</evidence>
<evidence type="ECO:0000269" key="4">
    <source>
    </source>
</evidence>
<evidence type="ECO:0000269" key="5">
    <source>
    </source>
</evidence>
<evidence type="ECO:0000303" key="6">
    <source>
    </source>
</evidence>
<evidence type="ECO:0000305" key="7"/>
<evidence type="ECO:0000312" key="8">
    <source>
        <dbReference type="Araport" id="AT4G26430"/>
    </source>
</evidence>
<evidence type="ECO:0000312" key="9">
    <source>
        <dbReference type="EMBL" id="CAA18227.1"/>
    </source>
</evidence>
<dbReference type="EMBL" id="AF434762">
    <property type="protein sequence ID" value="AAL49561.1"/>
    <property type="molecule type" value="mRNA"/>
</dbReference>
<dbReference type="EMBL" id="AF395064">
    <property type="protein sequence ID" value="AAL58107.1"/>
    <property type="molecule type" value="mRNA"/>
</dbReference>
<dbReference type="EMBL" id="AL022223">
    <property type="protein sequence ID" value="CAA18227.1"/>
    <property type="status" value="ALT_SEQ"/>
    <property type="molecule type" value="Genomic_DNA"/>
</dbReference>
<dbReference type="EMBL" id="AL161565">
    <property type="protein sequence ID" value="CAB79498.1"/>
    <property type="status" value="ALT_SEQ"/>
    <property type="molecule type" value="Genomic_DNA"/>
</dbReference>
<dbReference type="EMBL" id="CP002687">
    <property type="protein sequence ID" value="AEE85198.1"/>
    <property type="molecule type" value="Genomic_DNA"/>
</dbReference>
<dbReference type="EMBL" id="AY080638">
    <property type="protein sequence ID" value="AAL85984.1"/>
    <property type="molecule type" value="mRNA"/>
</dbReference>
<dbReference type="EMBL" id="BT002345">
    <property type="protein sequence ID" value="AAN86178.1"/>
    <property type="molecule type" value="mRNA"/>
</dbReference>
<dbReference type="EMBL" id="AY087556">
    <property type="protein sequence ID" value="AAM65098.1"/>
    <property type="molecule type" value="mRNA"/>
</dbReference>
<dbReference type="PIR" id="T05061">
    <property type="entry name" value="T05061"/>
</dbReference>
<dbReference type="RefSeq" id="NP_567746.1">
    <property type="nucleotide sequence ID" value="NM_118776.3"/>
</dbReference>
<dbReference type="SMR" id="Q8W1P0"/>
<dbReference type="BioGRID" id="14036">
    <property type="interactions" value="4"/>
</dbReference>
<dbReference type="FunCoup" id="Q8W1P0">
    <property type="interactions" value="3933"/>
</dbReference>
<dbReference type="IntAct" id="Q8W1P0">
    <property type="interactions" value="4"/>
</dbReference>
<dbReference type="STRING" id="3702.Q8W1P0"/>
<dbReference type="PaxDb" id="3702-AT4G26430.1"/>
<dbReference type="ProteomicsDB" id="222702"/>
<dbReference type="EnsemblPlants" id="AT4G26430.1">
    <property type="protein sequence ID" value="AT4G26430.1"/>
    <property type="gene ID" value="AT4G26430"/>
</dbReference>
<dbReference type="GeneID" id="828749"/>
<dbReference type="Gramene" id="AT4G26430.1">
    <property type="protein sequence ID" value="AT4G26430.1"/>
    <property type="gene ID" value="AT4G26430"/>
</dbReference>
<dbReference type="KEGG" id="ath:AT4G26430"/>
<dbReference type="Araport" id="AT4G26430"/>
<dbReference type="TAIR" id="AT4G26430">
    <property type="gene designation" value="CSN6B"/>
</dbReference>
<dbReference type="eggNOG" id="KOG3050">
    <property type="taxonomic scope" value="Eukaryota"/>
</dbReference>
<dbReference type="HOGENOM" id="CLU_027018_1_2_1"/>
<dbReference type="InParanoid" id="Q8W1P0"/>
<dbReference type="OMA" id="NTAYDKH"/>
<dbReference type="OrthoDB" id="1378at2759"/>
<dbReference type="PhylomeDB" id="Q8W1P0"/>
<dbReference type="PRO" id="PR:Q8W1P0"/>
<dbReference type="Proteomes" id="UP000006548">
    <property type="component" value="Chromosome 4"/>
</dbReference>
<dbReference type="ExpressionAtlas" id="Q8W1P0">
    <property type="expression patterns" value="baseline and differential"/>
</dbReference>
<dbReference type="GO" id="GO:0008180">
    <property type="term" value="C:COP9 signalosome"/>
    <property type="evidence" value="ECO:0007669"/>
    <property type="project" value="UniProtKB-KW"/>
</dbReference>
<dbReference type="GO" id="GO:0005737">
    <property type="term" value="C:cytoplasm"/>
    <property type="evidence" value="ECO:0007669"/>
    <property type="project" value="UniProtKB-SubCell"/>
</dbReference>
<dbReference type="GO" id="GO:0008237">
    <property type="term" value="F:metallopeptidase activity"/>
    <property type="evidence" value="ECO:0007669"/>
    <property type="project" value="InterPro"/>
</dbReference>
<dbReference type="GO" id="GO:0010387">
    <property type="term" value="P:COP9 signalosome assembly"/>
    <property type="evidence" value="ECO:0000315"/>
    <property type="project" value="TAIR"/>
</dbReference>
<dbReference type="GO" id="GO:0000338">
    <property type="term" value="P:protein deneddylation"/>
    <property type="evidence" value="ECO:0000304"/>
    <property type="project" value="TAIR"/>
</dbReference>
<dbReference type="GO" id="GO:0009585">
    <property type="term" value="P:red, far-red light phototransduction"/>
    <property type="evidence" value="ECO:0007669"/>
    <property type="project" value="UniProtKB-KW"/>
</dbReference>
<dbReference type="CDD" id="cd08063">
    <property type="entry name" value="MPN_CSN6"/>
    <property type="match status" value="1"/>
</dbReference>
<dbReference type="FunFam" id="3.40.140.10:FF:000037">
    <property type="entry name" value="COP9 signalosome subunit 6"/>
    <property type="match status" value="1"/>
</dbReference>
<dbReference type="Gene3D" id="3.40.140.10">
    <property type="entry name" value="Cytidine Deaminase, domain 2"/>
    <property type="match status" value="1"/>
</dbReference>
<dbReference type="InterPro" id="IPR024969">
    <property type="entry name" value="EIF3F/CSN6-like_C"/>
</dbReference>
<dbReference type="InterPro" id="IPR000555">
    <property type="entry name" value="JAMM/MPN+_dom"/>
</dbReference>
<dbReference type="InterPro" id="IPR037518">
    <property type="entry name" value="MPN"/>
</dbReference>
<dbReference type="InterPro" id="IPR033859">
    <property type="entry name" value="MPN_CSN6"/>
</dbReference>
<dbReference type="PANTHER" id="PTHR10540:SF18">
    <property type="entry name" value="COP9 SIGNALOSOME COMPLEX SUBUNIT 6B"/>
    <property type="match status" value="1"/>
</dbReference>
<dbReference type="PANTHER" id="PTHR10540">
    <property type="entry name" value="EUKARYOTIC TRANSLATION INITIATION FACTOR 3 SUBUNIT F-RELATED"/>
    <property type="match status" value="1"/>
</dbReference>
<dbReference type="Pfam" id="PF01398">
    <property type="entry name" value="JAB"/>
    <property type="match status" value="1"/>
</dbReference>
<dbReference type="Pfam" id="PF13012">
    <property type="entry name" value="MitMem_reg"/>
    <property type="match status" value="1"/>
</dbReference>
<dbReference type="SMART" id="SM00232">
    <property type="entry name" value="JAB_MPN"/>
    <property type="match status" value="1"/>
</dbReference>
<dbReference type="PROSITE" id="PS50249">
    <property type="entry name" value="MPN"/>
    <property type="match status" value="1"/>
</dbReference>
<protein>
    <recommendedName>
        <fullName evidence="6">COP9 signalosome complex subunit 6b</fullName>
        <shortName evidence="6">AtCSN6b</shortName>
        <shortName evidence="6">Signalosome subunit 6b</shortName>
    </recommendedName>
</protein>
<organism>
    <name type="scientific">Arabidopsis thaliana</name>
    <name type="common">Mouse-ear cress</name>
    <dbReference type="NCBI Taxonomy" id="3702"/>
    <lineage>
        <taxon>Eukaryota</taxon>
        <taxon>Viridiplantae</taxon>
        <taxon>Streptophyta</taxon>
        <taxon>Embryophyta</taxon>
        <taxon>Tracheophyta</taxon>
        <taxon>Spermatophyta</taxon>
        <taxon>Magnoliopsida</taxon>
        <taxon>eudicotyledons</taxon>
        <taxon>Gunneridae</taxon>
        <taxon>Pentapetalae</taxon>
        <taxon>rosids</taxon>
        <taxon>malvids</taxon>
        <taxon>Brassicales</taxon>
        <taxon>Brassicaceae</taxon>
        <taxon>Camelineae</taxon>
        <taxon>Arabidopsis</taxon>
    </lineage>
</organism>
<keyword id="KW-0963">Cytoplasm</keyword>
<keyword id="KW-0217">Developmental protein</keyword>
<keyword id="KW-0539">Nucleus</keyword>
<keyword id="KW-0607">Phytochrome signaling pathway</keyword>
<keyword id="KW-1185">Reference proteome</keyword>
<keyword id="KW-0736">Signalosome</keyword>
<gene>
    <name evidence="6" type="primary">CSN6B</name>
    <name evidence="8" type="ordered locus">At4g26430</name>
    <name evidence="9" type="ORF">M3E9.140</name>
</gene>
<name>CSN6B_ARATH</name>
<proteinExistence type="evidence at protein level"/>
<accession>Q8W1P0</accession>
<accession>O65591</accession>
<accession>Q8RXW5</accession>
<accession>Q8W205</accession>